<protein>
    <recommendedName>
        <fullName evidence="1">Large ribosomal subunit protein uL10</fullName>
    </recommendedName>
    <alternativeName>
        <fullName evidence="2">50S ribosomal protein L10</fullName>
    </alternativeName>
</protein>
<proteinExistence type="inferred from homology"/>
<dbReference type="EMBL" id="CP000034">
    <property type="protein sequence ID" value="ABB63698.1"/>
    <property type="molecule type" value="Genomic_DNA"/>
</dbReference>
<dbReference type="RefSeq" id="WP_001207201.1">
    <property type="nucleotide sequence ID" value="NC_007606.1"/>
</dbReference>
<dbReference type="RefSeq" id="YP_405189.1">
    <property type="nucleotide sequence ID" value="NC_007606.1"/>
</dbReference>
<dbReference type="SMR" id="Q32AF7"/>
<dbReference type="STRING" id="300267.SDY_3743"/>
<dbReference type="EnsemblBacteria" id="ABB63698">
    <property type="protein sequence ID" value="ABB63698"/>
    <property type="gene ID" value="SDY_3743"/>
</dbReference>
<dbReference type="GeneID" id="93777909"/>
<dbReference type="KEGG" id="sdy:SDY_3743"/>
<dbReference type="PATRIC" id="fig|300267.13.peg.4438"/>
<dbReference type="HOGENOM" id="CLU_092227_0_2_6"/>
<dbReference type="Proteomes" id="UP000002716">
    <property type="component" value="Chromosome"/>
</dbReference>
<dbReference type="GO" id="GO:0015934">
    <property type="term" value="C:large ribosomal subunit"/>
    <property type="evidence" value="ECO:0007669"/>
    <property type="project" value="InterPro"/>
</dbReference>
<dbReference type="GO" id="GO:0070180">
    <property type="term" value="F:large ribosomal subunit rRNA binding"/>
    <property type="evidence" value="ECO:0007669"/>
    <property type="project" value="UniProtKB-UniRule"/>
</dbReference>
<dbReference type="GO" id="GO:0003735">
    <property type="term" value="F:structural constituent of ribosome"/>
    <property type="evidence" value="ECO:0007669"/>
    <property type="project" value="InterPro"/>
</dbReference>
<dbReference type="GO" id="GO:0006412">
    <property type="term" value="P:translation"/>
    <property type="evidence" value="ECO:0007669"/>
    <property type="project" value="UniProtKB-UniRule"/>
</dbReference>
<dbReference type="CDD" id="cd05797">
    <property type="entry name" value="Ribosomal_L10"/>
    <property type="match status" value="1"/>
</dbReference>
<dbReference type="FunFam" id="3.30.70.1730:FF:000001">
    <property type="entry name" value="50S ribosomal protein L10"/>
    <property type="match status" value="1"/>
</dbReference>
<dbReference type="Gene3D" id="3.30.70.1730">
    <property type="match status" value="1"/>
</dbReference>
<dbReference type="Gene3D" id="6.10.250.2350">
    <property type="match status" value="1"/>
</dbReference>
<dbReference type="HAMAP" id="MF_00362">
    <property type="entry name" value="Ribosomal_uL10"/>
    <property type="match status" value="1"/>
</dbReference>
<dbReference type="InterPro" id="IPR001790">
    <property type="entry name" value="Ribosomal_uL10"/>
</dbReference>
<dbReference type="InterPro" id="IPR043141">
    <property type="entry name" value="Ribosomal_uL10-like_sf"/>
</dbReference>
<dbReference type="InterPro" id="IPR022973">
    <property type="entry name" value="Ribosomal_uL10_bac"/>
</dbReference>
<dbReference type="InterPro" id="IPR047865">
    <property type="entry name" value="Ribosomal_uL10_bac_type"/>
</dbReference>
<dbReference type="InterPro" id="IPR002363">
    <property type="entry name" value="Ribosomal_uL10_CS_bac"/>
</dbReference>
<dbReference type="NCBIfam" id="NF000955">
    <property type="entry name" value="PRK00099.1-1"/>
    <property type="match status" value="1"/>
</dbReference>
<dbReference type="PANTHER" id="PTHR11560">
    <property type="entry name" value="39S RIBOSOMAL PROTEIN L10, MITOCHONDRIAL"/>
    <property type="match status" value="1"/>
</dbReference>
<dbReference type="Pfam" id="PF00466">
    <property type="entry name" value="Ribosomal_L10"/>
    <property type="match status" value="1"/>
</dbReference>
<dbReference type="SUPFAM" id="SSF160369">
    <property type="entry name" value="Ribosomal protein L10-like"/>
    <property type="match status" value="1"/>
</dbReference>
<dbReference type="PROSITE" id="PS01109">
    <property type="entry name" value="RIBOSOMAL_L10"/>
    <property type="match status" value="1"/>
</dbReference>
<feature type="chain" id="PRO_0000234886" description="Large ribosomal subunit protein uL10">
    <location>
        <begin position="1"/>
        <end position="165"/>
    </location>
</feature>
<feature type="modified residue" description="N6-acetyllysine" evidence="1">
    <location>
        <position position="37"/>
    </location>
</feature>
<feature type="modified residue" description="N6-acetyllysine" evidence="1">
    <location>
        <position position="105"/>
    </location>
</feature>
<organism>
    <name type="scientific">Shigella dysenteriae serotype 1 (strain Sd197)</name>
    <dbReference type="NCBI Taxonomy" id="300267"/>
    <lineage>
        <taxon>Bacteria</taxon>
        <taxon>Pseudomonadati</taxon>
        <taxon>Pseudomonadota</taxon>
        <taxon>Gammaproteobacteria</taxon>
        <taxon>Enterobacterales</taxon>
        <taxon>Enterobacteriaceae</taxon>
        <taxon>Shigella</taxon>
    </lineage>
</organism>
<reference key="1">
    <citation type="journal article" date="2005" name="Nucleic Acids Res.">
        <title>Genome dynamics and diversity of Shigella species, the etiologic agents of bacillary dysentery.</title>
        <authorList>
            <person name="Yang F."/>
            <person name="Yang J."/>
            <person name="Zhang X."/>
            <person name="Chen L."/>
            <person name="Jiang Y."/>
            <person name="Yan Y."/>
            <person name="Tang X."/>
            <person name="Wang J."/>
            <person name="Xiong Z."/>
            <person name="Dong J."/>
            <person name="Xue Y."/>
            <person name="Zhu Y."/>
            <person name="Xu X."/>
            <person name="Sun L."/>
            <person name="Chen S."/>
            <person name="Nie H."/>
            <person name="Peng J."/>
            <person name="Xu J."/>
            <person name="Wang Y."/>
            <person name="Yuan Z."/>
            <person name="Wen Y."/>
            <person name="Yao Z."/>
            <person name="Shen Y."/>
            <person name="Qiang B."/>
            <person name="Hou Y."/>
            <person name="Yu J."/>
            <person name="Jin Q."/>
        </authorList>
    </citation>
    <scope>NUCLEOTIDE SEQUENCE [LARGE SCALE GENOMIC DNA]</scope>
    <source>
        <strain>Sd197</strain>
    </source>
</reference>
<evidence type="ECO:0000255" key="1">
    <source>
        <dbReference type="HAMAP-Rule" id="MF_00362"/>
    </source>
</evidence>
<evidence type="ECO:0000305" key="2"/>
<accession>Q32AF7</accession>
<keyword id="KW-0007">Acetylation</keyword>
<keyword id="KW-1185">Reference proteome</keyword>
<keyword id="KW-0687">Ribonucleoprotein</keyword>
<keyword id="KW-0689">Ribosomal protein</keyword>
<keyword id="KW-0694">RNA-binding</keyword>
<keyword id="KW-0699">rRNA-binding</keyword>
<comment type="function">
    <text evidence="1">Forms part of the ribosomal stalk, playing a central role in the interaction of the ribosome with GTP-bound translation factors.</text>
</comment>
<comment type="subunit">
    <text evidence="1">Part of the ribosomal stalk of the 50S ribosomal subunit. The N-terminus interacts with L11 and the large rRNA to form the base of the stalk. The C-terminus forms an elongated spine to which L12 dimers bind in a sequential fashion forming a multimeric L10(L12)X complex.</text>
</comment>
<comment type="similarity">
    <text evidence="1">Belongs to the universal ribosomal protein uL10 family.</text>
</comment>
<gene>
    <name evidence="1" type="primary">rplJ</name>
    <name type="ordered locus">SDY_3743</name>
</gene>
<sequence>MALNLQDKQAIVAEVSEVAKGALSAVVADSRGVTVDKMTELRKAGREAGVYMRVVRNTLLRRAVEGTPFECLKDAFVGPTLIAYSMEHPGAAARLFKEFAKANAKFEVKAAAFEGELIPASQIDRLATLPTYEEAIARLMATMKEASAGKLVRTLAAVRDAKEAA</sequence>
<name>RL10_SHIDS</name>